<keyword id="KW-0687">Ribonucleoprotein</keyword>
<keyword id="KW-0689">Ribosomal protein</keyword>
<proteinExistence type="inferred from homology"/>
<organism>
    <name type="scientific">Rickettsia bellii (strain OSU 85-389)</name>
    <dbReference type="NCBI Taxonomy" id="391896"/>
    <lineage>
        <taxon>Bacteria</taxon>
        <taxon>Pseudomonadati</taxon>
        <taxon>Pseudomonadota</taxon>
        <taxon>Alphaproteobacteria</taxon>
        <taxon>Rickettsiales</taxon>
        <taxon>Rickettsiaceae</taxon>
        <taxon>Rickettsieae</taxon>
        <taxon>Rickettsia</taxon>
        <taxon>belli group</taxon>
    </lineage>
</organism>
<comment type="similarity">
    <text evidence="1">Belongs to the bacterial ribosomal protein bS16 family.</text>
</comment>
<accession>A8GY79</accession>
<dbReference type="EMBL" id="CP000849">
    <property type="protein sequence ID" value="ABV79829.1"/>
    <property type="molecule type" value="Genomic_DNA"/>
</dbReference>
<dbReference type="RefSeq" id="WP_011478028.1">
    <property type="nucleotide sequence ID" value="NC_009883.1"/>
</dbReference>
<dbReference type="SMR" id="A8GY79"/>
<dbReference type="KEGG" id="rbo:A1I_07655"/>
<dbReference type="HOGENOM" id="CLU_100590_3_1_5"/>
<dbReference type="GO" id="GO:0005737">
    <property type="term" value="C:cytoplasm"/>
    <property type="evidence" value="ECO:0007669"/>
    <property type="project" value="UniProtKB-ARBA"/>
</dbReference>
<dbReference type="GO" id="GO:0015935">
    <property type="term" value="C:small ribosomal subunit"/>
    <property type="evidence" value="ECO:0007669"/>
    <property type="project" value="TreeGrafter"/>
</dbReference>
<dbReference type="GO" id="GO:0003735">
    <property type="term" value="F:structural constituent of ribosome"/>
    <property type="evidence" value="ECO:0007669"/>
    <property type="project" value="InterPro"/>
</dbReference>
<dbReference type="GO" id="GO:0006412">
    <property type="term" value="P:translation"/>
    <property type="evidence" value="ECO:0007669"/>
    <property type="project" value="UniProtKB-UniRule"/>
</dbReference>
<dbReference type="Gene3D" id="3.30.1320.10">
    <property type="match status" value="1"/>
</dbReference>
<dbReference type="HAMAP" id="MF_00385">
    <property type="entry name" value="Ribosomal_bS16"/>
    <property type="match status" value="1"/>
</dbReference>
<dbReference type="InterPro" id="IPR000307">
    <property type="entry name" value="Ribosomal_bS16"/>
</dbReference>
<dbReference type="InterPro" id="IPR020592">
    <property type="entry name" value="Ribosomal_bS16_CS"/>
</dbReference>
<dbReference type="InterPro" id="IPR023803">
    <property type="entry name" value="Ribosomal_bS16_dom_sf"/>
</dbReference>
<dbReference type="NCBIfam" id="TIGR00002">
    <property type="entry name" value="S16"/>
    <property type="match status" value="1"/>
</dbReference>
<dbReference type="PANTHER" id="PTHR12919">
    <property type="entry name" value="30S RIBOSOMAL PROTEIN S16"/>
    <property type="match status" value="1"/>
</dbReference>
<dbReference type="PANTHER" id="PTHR12919:SF20">
    <property type="entry name" value="SMALL RIBOSOMAL SUBUNIT PROTEIN BS16M"/>
    <property type="match status" value="1"/>
</dbReference>
<dbReference type="Pfam" id="PF00886">
    <property type="entry name" value="Ribosomal_S16"/>
    <property type="match status" value="1"/>
</dbReference>
<dbReference type="SUPFAM" id="SSF54565">
    <property type="entry name" value="Ribosomal protein S16"/>
    <property type="match status" value="1"/>
</dbReference>
<dbReference type="PROSITE" id="PS00732">
    <property type="entry name" value="RIBOSOMAL_S16"/>
    <property type="match status" value="1"/>
</dbReference>
<reference key="1">
    <citation type="submission" date="2007-09" db="EMBL/GenBank/DDBJ databases">
        <title>Complete genome sequencing of Rickettsia bellii.</title>
        <authorList>
            <person name="Madan A."/>
            <person name="Lee H."/>
            <person name="Madan A."/>
            <person name="Yoon J.-G."/>
            <person name="Ryu G.-Y."/>
            <person name="Dasch G."/>
            <person name="Ereemeva M."/>
        </authorList>
    </citation>
    <scope>NUCLEOTIDE SEQUENCE [LARGE SCALE GENOMIC DNA]</scope>
    <source>
        <strain>OSU 85-389</strain>
    </source>
</reference>
<sequence length="111" mass="12498">MAVKIRLARGGAKKRPFYRVVVANATAPRDGDFLEKVGTYNPMLAKDSNERVVLKADRVEYWLKSGAKPTDRVARFIEQAGIALPEKVKKEMEVKLKNRKAKPSKKEAKEA</sequence>
<feature type="chain" id="PRO_1000049334" description="Small ribosomal subunit protein bS16">
    <location>
        <begin position="1"/>
        <end position="111"/>
    </location>
</feature>
<protein>
    <recommendedName>
        <fullName evidence="1">Small ribosomal subunit protein bS16</fullName>
    </recommendedName>
    <alternativeName>
        <fullName evidence="2">30S ribosomal protein S16</fullName>
    </alternativeName>
</protein>
<gene>
    <name evidence="1" type="primary">rpsP</name>
    <name type="ordered locus">A1I_07655</name>
</gene>
<evidence type="ECO:0000255" key="1">
    <source>
        <dbReference type="HAMAP-Rule" id="MF_00385"/>
    </source>
</evidence>
<evidence type="ECO:0000305" key="2"/>
<name>RS16_RICB8</name>